<accession>Q6G850</accession>
<keyword id="KW-0010">Activator</keyword>
<keyword id="KW-0963">Cytoplasm</keyword>
<keyword id="KW-0238">DNA-binding</keyword>
<keyword id="KW-0597">Phosphoprotein</keyword>
<keyword id="KW-0804">Transcription</keyword>
<keyword id="KW-0805">Transcription regulation</keyword>
<keyword id="KW-0902">Two-component regulatory system</keyword>
<dbReference type="EMBL" id="BX571857">
    <property type="protein sequence ID" value="CAG43611.1"/>
    <property type="molecule type" value="Genomic_DNA"/>
</dbReference>
<dbReference type="RefSeq" id="WP_000153535.1">
    <property type="nucleotide sequence ID" value="NC_002953.3"/>
</dbReference>
<dbReference type="SMR" id="Q6G850"/>
<dbReference type="KEGG" id="sas:SAS1806"/>
<dbReference type="HOGENOM" id="CLU_000445_90_10_9"/>
<dbReference type="GO" id="GO:0005737">
    <property type="term" value="C:cytoplasm"/>
    <property type="evidence" value="ECO:0007669"/>
    <property type="project" value="UniProtKB-SubCell"/>
</dbReference>
<dbReference type="GO" id="GO:0003677">
    <property type="term" value="F:DNA binding"/>
    <property type="evidence" value="ECO:0007669"/>
    <property type="project" value="UniProtKB-KW"/>
</dbReference>
<dbReference type="GO" id="GO:0000160">
    <property type="term" value="P:phosphorelay signal transduction system"/>
    <property type="evidence" value="ECO:0007669"/>
    <property type="project" value="UniProtKB-KW"/>
</dbReference>
<dbReference type="GO" id="GO:0006355">
    <property type="term" value="P:regulation of DNA-templated transcription"/>
    <property type="evidence" value="ECO:0007669"/>
    <property type="project" value="InterPro"/>
</dbReference>
<dbReference type="CDD" id="cd06170">
    <property type="entry name" value="LuxR_C_like"/>
    <property type="match status" value="1"/>
</dbReference>
<dbReference type="CDD" id="cd17535">
    <property type="entry name" value="REC_NarL-like"/>
    <property type="match status" value="1"/>
</dbReference>
<dbReference type="Gene3D" id="3.40.50.2300">
    <property type="match status" value="1"/>
</dbReference>
<dbReference type="InterPro" id="IPR011006">
    <property type="entry name" value="CheY-like_superfamily"/>
</dbReference>
<dbReference type="InterPro" id="IPR016032">
    <property type="entry name" value="Sig_transdc_resp-reg_C-effctor"/>
</dbReference>
<dbReference type="InterPro" id="IPR001789">
    <property type="entry name" value="Sig_transdc_resp-reg_receiver"/>
</dbReference>
<dbReference type="InterPro" id="IPR000792">
    <property type="entry name" value="Tscrpt_reg_LuxR_C"/>
</dbReference>
<dbReference type="InterPro" id="IPR039420">
    <property type="entry name" value="WalR-like"/>
</dbReference>
<dbReference type="PANTHER" id="PTHR43214:SF37">
    <property type="entry name" value="TRANSCRIPTIONAL REGULATORY PROTEIN YDFI"/>
    <property type="match status" value="1"/>
</dbReference>
<dbReference type="PANTHER" id="PTHR43214">
    <property type="entry name" value="TWO-COMPONENT RESPONSE REGULATOR"/>
    <property type="match status" value="1"/>
</dbReference>
<dbReference type="Pfam" id="PF00196">
    <property type="entry name" value="GerE"/>
    <property type="match status" value="1"/>
</dbReference>
<dbReference type="Pfam" id="PF00072">
    <property type="entry name" value="Response_reg"/>
    <property type="match status" value="1"/>
</dbReference>
<dbReference type="PRINTS" id="PR00038">
    <property type="entry name" value="HTHLUXR"/>
</dbReference>
<dbReference type="SMART" id="SM00421">
    <property type="entry name" value="HTH_LUXR"/>
    <property type="match status" value="1"/>
</dbReference>
<dbReference type="SMART" id="SM00448">
    <property type="entry name" value="REC"/>
    <property type="match status" value="1"/>
</dbReference>
<dbReference type="SUPFAM" id="SSF46894">
    <property type="entry name" value="C-terminal effector domain of the bipartite response regulators"/>
    <property type="match status" value="1"/>
</dbReference>
<dbReference type="SUPFAM" id="SSF52172">
    <property type="entry name" value="CheY-like"/>
    <property type="match status" value="1"/>
</dbReference>
<dbReference type="PROSITE" id="PS50043">
    <property type="entry name" value="HTH_LUXR_2"/>
    <property type="match status" value="1"/>
</dbReference>
<dbReference type="PROSITE" id="PS50110">
    <property type="entry name" value="RESPONSE_REGULATORY"/>
    <property type="match status" value="1"/>
</dbReference>
<proteinExistence type="inferred from homology"/>
<name>VRAR_STAAS</name>
<gene>
    <name type="primary">vraR</name>
    <name type="ordered locus">SAS1806</name>
</gene>
<protein>
    <recommendedName>
        <fullName>Response regulator protein VraR</fullName>
    </recommendedName>
</protein>
<organism>
    <name type="scientific">Staphylococcus aureus (strain MSSA476)</name>
    <dbReference type="NCBI Taxonomy" id="282459"/>
    <lineage>
        <taxon>Bacteria</taxon>
        <taxon>Bacillati</taxon>
        <taxon>Bacillota</taxon>
        <taxon>Bacilli</taxon>
        <taxon>Bacillales</taxon>
        <taxon>Staphylococcaceae</taxon>
        <taxon>Staphylococcus</taxon>
    </lineage>
</organism>
<evidence type="ECO:0000250" key="1">
    <source>
        <dbReference type="UniProtKB" id="P0C0Z1"/>
    </source>
</evidence>
<evidence type="ECO:0000250" key="2">
    <source>
        <dbReference type="UniProtKB" id="Q7A2Q1"/>
    </source>
</evidence>
<evidence type="ECO:0000255" key="3">
    <source>
        <dbReference type="PROSITE-ProRule" id="PRU00169"/>
    </source>
</evidence>
<evidence type="ECO:0000255" key="4">
    <source>
        <dbReference type="PROSITE-ProRule" id="PRU00411"/>
    </source>
</evidence>
<evidence type="ECO:0000305" key="5"/>
<feature type="chain" id="PRO_0000081273" description="Response regulator protein VraR">
    <location>
        <begin position="1"/>
        <end position="209"/>
    </location>
</feature>
<feature type="domain" description="Response regulatory" evidence="3">
    <location>
        <begin position="4"/>
        <end position="120"/>
    </location>
</feature>
<feature type="domain" description="HTH luxR-type" evidence="4">
    <location>
        <begin position="141"/>
        <end position="206"/>
    </location>
</feature>
<feature type="DNA-binding region" description="H-T-H motif" evidence="4">
    <location>
        <begin position="165"/>
        <end position="184"/>
    </location>
</feature>
<feature type="modified residue" description="4-aspartylphosphate" evidence="3">
    <location>
        <position position="55"/>
    </location>
</feature>
<comment type="function">
    <text evidence="1 2">Member of the two-component regulatory system VraS/VraR involved in the control of the cell wall peptidoglycan biosynthesis. Upon cellular stress, the histidine kinase VraS transfers the phosphoryl group onto VraR. Upon phosphorylation, VraR dimerizes at the N-terminal domain. In turn, phosphorylation-induced dimerization expands and enhances the VraR binding to its own promoter leading to increased expression and subsequent modulation of as many as 40 genes, which ultimately constitute the S.aureus response to cell wall damage (By similarity). In addition, inhibits the host autophagic flux and delays the early stage of autophagosome formation, thereby promoting bacterial survival. Facilitates the ability of S.aureus to resist host polymorphonuclear leukocytes-mediated phagocytosis and killing thus contributing to immune evasion (By similarity).</text>
</comment>
<comment type="subunit">
    <text evidence="2">Homodimer.</text>
</comment>
<comment type="subcellular location">
    <subcellularLocation>
        <location evidence="5">Cytoplasm</location>
    </subcellularLocation>
</comment>
<comment type="PTM">
    <text evidence="2">Phosphorylated by VraS. Phosphorylation state of VraR controls dimerization of the protein.</text>
</comment>
<sequence length="209" mass="23559">MTIKVLFVDDHEMVRIGISSYLSTQSDIEVVGEGASGKEAIAKAHELKPDLILMDLLMEDMDGVEATTQIKKDLPQIKVLMLTSFIEDKEVYRALDAGVDSYILKTTSAKDIADAVRKTSRGESVFEPEVLVKMRNRMKKRAELYEMLTEREMEILLLIAKGYSNQEIASASHITIKTVKTHVSNILSKLEVQDRTQAVIYAFQHNLIQ</sequence>
<reference key="1">
    <citation type="journal article" date="2004" name="Proc. Natl. Acad. Sci. U.S.A.">
        <title>Complete genomes of two clinical Staphylococcus aureus strains: evidence for the rapid evolution of virulence and drug resistance.</title>
        <authorList>
            <person name="Holden M.T.G."/>
            <person name="Feil E.J."/>
            <person name="Lindsay J.A."/>
            <person name="Peacock S.J."/>
            <person name="Day N.P.J."/>
            <person name="Enright M.C."/>
            <person name="Foster T.J."/>
            <person name="Moore C.E."/>
            <person name="Hurst L."/>
            <person name="Atkin R."/>
            <person name="Barron A."/>
            <person name="Bason N."/>
            <person name="Bentley S.D."/>
            <person name="Chillingworth C."/>
            <person name="Chillingworth T."/>
            <person name="Churcher C."/>
            <person name="Clark L."/>
            <person name="Corton C."/>
            <person name="Cronin A."/>
            <person name="Doggett J."/>
            <person name="Dowd L."/>
            <person name="Feltwell T."/>
            <person name="Hance Z."/>
            <person name="Harris B."/>
            <person name="Hauser H."/>
            <person name="Holroyd S."/>
            <person name="Jagels K."/>
            <person name="James K.D."/>
            <person name="Lennard N."/>
            <person name="Line A."/>
            <person name="Mayes R."/>
            <person name="Moule S."/>
            <person name="Mungall K."/>
            <person name="Ormond D."/>
            <person name="Quail M.A."/>
            <person name="Rabbinowitsch E."/>
            <person name="Rutherford K.M."/>
            <person name="Sanders M."/>
            <person name="Sharp S."/>
            <person name="Simmonds M."/>
            <person name="Stevens K."/>
            <person name="Whitehead S."/>
            <person name="Barrell B.G."/>
            <person name="Spratt B.G."/>
            <person name="Parkhill J."/>
        </authorList>
    </citation>
    <scope>NUCLEOTIDE SEQUENCE [LARGE SCALE GENOMIC DNA]</scope>
    <source>
        <strain>MSSA476</strain>
    </source>
</reference>